<proteinExistence type="inferred from homology"/>
<evidence type="ECO:0000250" key="1">
    <source>
        <dbReference type="UniProtKB" id="P00396"/>
    </source>
</evidence>
<evidence type="ECO:0000250" key="2">
    <source>
        <dbReference type="UniProtKB" id="P00401"/>
    </source>
</evidence>
<evidence type="ECO:0000255" key="3"/>
<evidence type="ECO:0000269" key="4">
    <source>
    </source>
</evidence>
<evidence type="ECO:0000269" key="5">
    <source>
    </source>
</evidence>
<evidence type="ECO:0000305" key="6"/>
<evidence type="ECO:0000312" key="7">
    <source>
        <dbReference type="WormBase" id="MTCE.26"/>
    </source>
</evidence>
<keyword id="KW-0106">Calcium</keyword>
<keyword id="KW-0186">Copper</keyword>
<keyword id="KW-0249">Electron transport</keyword>
<keyword id="KW-0349">Heme</keyword>
<keyword id="KW-0408">Iron</keyword>
<keyword id="KW-0460">Magnesium</keyword>
<keyword id="KW-0472">Membrane</keyword>
<keyword id="KW-0479">Metal-binding</keyword>
<keyword id="KW-0496">Mitochondrion</keyword>
<keyword id="KW-0999">Mitochondrion inner membrane</keyword>
<keyword id="KW-1185">Reference proteome</keyword>
<keyword id="KW-0679">Respiratory chain</keyword>
<keyword id="KW-1278">Translocase</keyword>
<keyword id="KW-0812">Transmembrane</keyword>
<keyword id="KW-1133">Transmembrane helix</keyword>
<keyword id="KW-0813">Transport</keyword>
<comment type="function">
    <text evidence="2">Component of the cytochrome c oxidase, the last enzyme in the mitochondrial electron transport chain which drives oxidative phosphorylation. The respiratory chain contains 3 multisubunit complexes succinate dehydrogenase (complex II, CII), ubiquinol-cytochrome c oxidoreductase (cytochrome b-c1 complex, complex III, CIII) and cytochrome c oxidase (complex IV, CIV), that cooperate to transfer electrons derived from NADH and succinate to molecular oxygen, creating an electrochemical gradient over the inner membrane that drives transmembrane transport and the ATP synthase. Cytochrome c oxidase is the component of the respiratory chain that catalyzes the reduction of oxygen to water. Electrons originating from reduced cytochrome c in the intermembrane space (IMS) are transferred via the dinuclear copper A center (CU(A)) of subunit 2 and heme A of subunit 1 to the active site in subunit 1, a binuclear center (BNC) formed by heme A3 and copper B (CU(B)). The BNC reduces molecular oxygen to 2 water molecules using 4 electrons from cytochrome c in the IMS and 4 protons from the mitochondrial matrix.</text>
</comment>
<comment type="catalytic activity">
    <reaction evidence="2">
        <text>4 Fe(II)-[cytochrome c] + O2 + 8 H(+)(in) = 4 Fe(III)-[cytochrome c] + 2 H2O + 4 H(+)(out)</text>
        <dbReference type="Rhea" id="RHEA:11436"/>
        <dbReference type="Rhea" id="RHEA-COMP:10350"/>
        <dbReference type="Rhea" id="RHEA-COMP:14399"/>
        <dbReference type="ChEBI" id="CHEBI:15377"/>
        <dbReference type="ChEBI" id="CHEBI:15378"/>
        <dbReference type="ChEBI" id="CHEBI:15379"/>
        <dbReference type="ChEBI" id="CHEBI:29033"/>
        <dbReference type="ChEBI" id="CHEBI:29034"/>
        <dbReference type="EC" id="7.1.1.9"/>
    </reaction>
    <physiologicalReaction direction="left-to-right" evidence="2">
        <dbReference type="Rhea" id="RHEA:11437"/>
    </physiologicalReaction>
</comment>
<comment type="cofactor">
    <cofactor evidence="2">
        <name>heme</name>
        <dbReference type="ChEBI" id="CHEBI:30413"/>
    </cofactor>
    <text evidence="2">Binds 2 heme A groups non-covalently per subunit.</text>
</comment>
<comment type="cofactor">
    <cofactor evidence="2">
        <name>Cu cation</name>
        <dbReference type="ChEBI" id="CHEBI:23378"/>
    </cofactor>
    <text evidence="2">Binds a copper B center.</text>
</comment>
<comment type="pathway">
    <text evidence="2">Energy metabolism; oxidative phosphorylation.</text>
</comment>
<comment type="subunit">
    <text evidence="2">Component of the cytochrome c oxidase (complex IV, CIV), a multisubunit enzyme composed of a catalytic core of 3 subunits and several supernumerary subunits. The complex exists as a monomer or a dimer and forms supercomplexes (SCs) in the inner mitochondrial membrane with ubiquinol-cytochrome c oxidoreductase (cytochrome b-c1 complex, complex III, CIII).</text>
</comment>
<comment type="subcellular location">
    <subcellularLocation>
        <location evidence="5">Mitochondrion inner membrane</location>
        <topology evidence="2">Multi-pass membrane protein</topology>
    </subcellularLocation>
</comment>
<comment type="similarity">
    <text evidence="6">Belongs to the heme-copper respiratory oxidase family.</text>
</comment>
<feature type="chain" id="PRO_0000183298" description="Cytochrome c oxidase subunit 1">
    <location>
        <begin position="1"/>
        <end position="525"/>
    </location>
</feature>
<feature type="transmembrane region" description="Helical" evidence="3">
    <location>
        <begin position="25"/>
        <end position="45"/>
    </location>
</feature>
<feature type="transmembrane region" description="Helical" evidence="3">
    <location>
        <begin position="71"/>
        <end position="91"/>
    </location>
</feature>
<feature type="transmembrane region" description="Helical" evidence="3">
    <location>
        <begin position="108"/>
        <end position="128"/>
    </location>
</feature>
<feature type="transmembrane region" description="Helical" evidence="3">
    <location>
        <begin position="152"/>
        <end position="172"/>
    </location>
</feature>
<feature type="transmembrane region" description="Helical" evidence="3">
    <location>
        <begin position="190"/>
        <end position="210"/>
    </location>
</feature>
<feature type="transmembrane region" description="Helical" evidence="3">
    <location>
        <begin position="241"/>
        <end position="261"/>
    </location>
</feature>
<feature type="transmembrane region" description="Helical" evidence="3">
    <location>
        <begin position="274"/>
        <end position="294"/>
    </location>
</feature>
<feature type="transmembrane region" description="Helical" evidence="3">
    <location>
        <begin position="317"/>
        <end position="337"/>
    </location>
</feature>
<feature type="transmembrane region" description="Helical" evidence="3">
    <location>
        <begin position="344"/>
        <end position="364"/>
    </location>
</feature>
<feature type="transmembrane region" description="Helical" evidence="3">
    <location>
        <begin position="387"/>
        <end position="407"/>
    </location>
</feature>
<feature type="transmembrane region" description="Helical" evidence="3">
    <location>
        <begin position="420"/>
        <end position="440"/>
    </location>
</feature>
<feature type="transmembrane region" description="Helical" evidence="3">
    <location>
        <begin position="459"/>
        <end position="479"/>
    </location>
</feature>
<feature type="binding site" evidence="2">
    <location>
        <position position="48"/>
    </location>
    <ligand>
        <name>Ca(2+)</name>
        <dbReference type="ChEBI" id="CHEBI:29108"/>
    </ligand>
</feature>
<feature type="binding site" evidence="2">
    <location>
        <position position="53"/>
    </location>
    <ligand>
        <name>Ca(2+)</name>
        <dbReference type="ChEBI" id="CHEBI:29108"/>
    </ligand>
</feature>
<feature type="binding site" description="axial binding residue" evidence="2">
    <location>
        <position position="69"/>
    </location>
    <ligand>
        <name>Fe(II)-heme a</name>
        <dbReference type="ChEBI" id="CHEBI:61715"/>
        <note>low-spin</note>
    </ligand>
    <ligandPart>
        <name>Fe</name>
        <dbReference type="ChEBI" id="CHEBI:18248"/>
    </ligandPart>
</feature>
<feature type="binding site" evidence="2">
    <location>
        <position position="247"/>
    </location>
    <ligand>
        <name>Cu cation</name>
        <dbReference type="ChEBI" id="CHEBI:23378"/>
        <label>B</label>
    </ligand>
</feature>
<feature type="binding site" evidence="1">
    <location>
        <position position="251"/>
    </location>
    <ligand>
        <name>O2</name>
        <dbReference type="ChEBI" id="CHEBI:15379"/>
    </ligand>
</feature>
<feature type="binding site" evidence="2">
    <location>
        <position position="297"/>
    </location>
    <ligand>
        <name>Cu cation</name>
        <dbReference type="ChEBI" id="CHEBI:23378"/>
        <label>B</label>
    </ligand>
</feature>
<feature type="binding site" evidence="2">
    <location>
        <position position="298"/>
    </location>
    <ligand>
        <name>Cu cation</name>
        <dbReference type="ChEBI" id="CHEBI:23378"/>
        <label>B</label>
    </ligand>
</feature>
<feature type="binding site" evidence="2">
    <location>
        <position position="375"/>
    </location>
    <ligand>
        <name>Mg(2+)</name>
        <dbReference type="ChEBI" id="CHEBI:18420"/>
        <note>ligand shared with subunit 2</note>
    </ligand>
</feature>
<feature type="binding site" evidence="2">
    <location>
        <position position="376"/>
    </location>
    <ligand>
        <name>Mg(2+)</name>
        <dbReference type="ChEBI" id="CHEBI:18420"/>
        <note>ligand shared with subunit 2</note>
    </ligand>
</feature>
<feature type="binding site" description="axial binding residue" evidence="2">
    <location>
        <position position="383"/>
    </location>
    <ligand>
        <name>heme a3</name>
        <dbReference type="ChEBI" id="CHEBI:83282"/>
        <note>high-spin</note>
    </ligand>
    <ligandPart>
        <name>Fe</name>
        <dbReference type="ChEBI" id="CHEBI:18248"/>
    </ligandPart>
</feature>
<feature type="binding site" description="axial binding residue" evidence="2">
    <location>
        <position position="385"/>
    </location>
    <ligand>
        <name>Fe(II)-heme a</name>
        <dbReference type="ChEBI" id="CHEBI:61715"/>
        <note>low-spin</note>
    </ligand>
    <ligandPart>
        <name>Fe</name>
        <dbReference type="ChEBI" id="CHEBI:18248"/>
    </ligandPart>
</feature>
<feature type="cross-link" description="1'-histidyl-3'-tyrosine (His-Tyr)" evidence="2">
    <location>
        <begin position="247"/>
        <end position="251"/>
    </location>
</feature>
<feature type="sequence variant" description="In strain: CB4856 and CB4857." evidence="4">
    <original>A</original>
    <variation>S</variation>
    <location>
        <position position="12"/>
    </location>
</feature>
<feature type="sequence variant" description="In strain: AB1, AB2, CB4852, CB4853, CB4855, CB4857, CB4858, KR314 and PB306." evidence="4">
    <original>I</original>
    <variation>M</variation>
    <location>
        <position position="466"/>
    </location>
</feature>
<protein>
    <recommendedName>
        <fullName>Cytochrome c oxidase subunit 1</fullName>
        <ecNumber>7.1.1.9</ecNumber>
    </recommendedName>
    <alternativeName>
        <fullName>Cytochrome c oxidase polypeptide I</fullName>
    </alternativeName>
</protein>
<accession>P24893</accession>
<gene>
    <name evidence="7" type="primary">ctc-1</name>
    <name evidence="7" type="synonym">coI</name>
    <name evidence="7" type="synonym">cox-1</name>
    <name evidence="7" type="ORF">MTCE.26</name>
</gene>
<dbReference type="EC" id="7.1.1.9"/>
<dbReference type="EMBL" id="AY171193">
    <property type="protein sequence ID" value="AAO16252.1"/>
    <property type="molecule type" value="Genomic_DNA"/>
</dbReference>
<dbReference type="EMBL" id="AY171194">
    <property type="protein sequence ID" value="AAO16256.1"/>
    <property type="molecule type" value="Genomic_DNA"/>
</dbReference>
<dbReference type="EMBL" id="AY171195">
    <property type="protein sequence ID" value="AAO16260.1"/>
    <property type="molecule type" value="Genomic_DNA"/>
</dbReference>
<dbReference type="EMBL" id="AY171196">
    <property type="protein sequence ID" value="AAO16264.1"/>
    <property type="molecule type" value="Genomic_DNA"/>
</dbReference>
<dbReference type="EMBL" id="AY171197">
    <property type="protein sequence ID" value="AAO16268.1"/>
    <property type="molecule type" value="Genomic_DNA"/>
</dbReference>
<dbReference type="EMBL" id="AY171198">
    <property type="protein sequence ID" value="AAO16272.1"/>
    <property type="molecule type" value="Genomic_DNA"/>
</dbReference>
<dbReference type="EMBL" id="AY171199">
    <property type="protein sequence ID" value="AAO16276.1"/>
    <property type="molecule type" value="Genomic_DNA"/>
</dbReference>
<dbReference type="EMBL" id="AY171200">
    <property type="protein sequence ID" value="AAO16280.1"/>
    <property type="molecule type" value="Genomic_DNA"/>
</dbReference>
<dbReference type="EMBL" id="AY171201">
    <property type="protein sequence ID" value="AAO16284.1"/>
    <property type="molecule type" value="Genomic_DNA"/>
</dbReference>
<dbReference type="EMBL" id="AY171202">
    <property type="protein sequence ID" value="AAO16288.1"/>
    <property type="molecule type" value="Genomic_DNA"/>
</dbReference>
<dbReference type="EMBL" id="AY171203">
    <property type="protein sequence ID" value="AAO16292.1"/>
    <property type="molecule type" value="Genomic_DNA"/>
</dbReference>
<dbReference type="EMBL" id="AY171204">
    <property type="protein sequence ID" value="AAO16296.1"/>
    <property type="molecule type" value="Genomic_DNA"/>
</dbReference>
<dbReference type="EMBL" id="AY171205">
    <property type="protein sequence ID" value="AAO16300.1"/>
    <property type="molecule type" value="Genomic_DNA"/>
</dbReference>
<dbReference type="EMBL" id="AY171206">
    <property type="protein sequence ID" value="AAO16304.1"/>
    <property type="molecule type" value="Genomic_DNA"/>
</dbReference>
<dbReference type="EMBL" id="AY171207">
    <property type="protein sequence ID" value="AAO16308.1"/>
    <property type="molecule type" value="Genomic_DNA"/>
</dbReference>
<dbReference type="EMBL" id="X54252">
    <property type="protein sequence ID" value="CAA38159.1"/>
    <property type="molecule type" value="Genomic_DNA"/>
</dbReference>
<dbReference type="PIR" id="S26034">
    <property type="entry name" value="S26034"/>
</dbReference>
<dbReference type="SMR" id="P24893"/>
<dbReference type="BioGRID" id="57538">
    <property type="interactions" value="1"/>
</dbReference>
<dbReference type="FunCoup" id="P24893">
    <property type="interactions" value="138"/>
</dbReference>
<dbReference type="IntAct" id="P24893">
    <property type="interactions" value="1"/>
</dbReference>
<dbReference type="STRING" id="6239.MTCE.26.1"/>
<dbReference type="PaxDb" id="6239-MTCE.26"/>
<dbReference type="EnsemblMetazoa" id="MTCE.26.1">
    <property type="protein sequence ID" value="MTCE.26.1"/>
    <property type="gene ID" value="WBGene00010964"/>
</dbReference>
<dbReference type="KEGG" id="cel:KEF34_p04"/>
<dbReference type="AGR" id="WB:WBGene00010964"/>
<dbReference type="CTD" id="4512"/>
<dbReference type="WormBase" id="MTCE.26">
    <property type="protein sequence ID" value="CE35350"/>
    <property type="gene ID" value="WBGene00010964"/>
    <property type="gene designation" value="ctc-1"/>
</dbReference>
<dbReference type="eggNOG" id="KOG4769">
    <property type="taxonomic scope" value="Eukaryota"/>
</dbReference>
<dbReference type="GeneTree" id="ENSGT00390000001518"/>
<dbReference type="HOGENOM" id="CLU_011899_7_3_1"/>
<dbReference type="InParanoid" id="P24893"/>
<dbReference type="PhylomeDB" id="P24893"/>
<dbReference type="Reactome" id="R-CEL-9837999">
    <property type="pathway name" value="Mitochondrial protein degradation"/>
</dbReference>
<dbReference type="Reactome" id="R-CEL-9864848">
    <property type="pathway name" value="Complex IV assembly"/>
</dbReference>
<dbReference type="UniPathway" id="UPA00705"/>
<dbReference type="PRO" id="PR:P24893"/>
<dbReference type="Proteomes" id="UP000001940">
    <property type="component" value="Mitochondrion"/>
</dbReference>
<dbReference type="Bgee" id="WBGene00010964">
    <property type="expression patterns" value="Expressed in pharyngeal muscle cell (C elegans) and 4 other cell types or tissues"/>
</dbReference>
<dbReference type="GO" id="GO:0005743">
    <property type="term" value="C:mitochondrial inner membrane"/>
    <property type="evidence" value="ECO:0000303"/>
    <property type="project" value="UniProtKB"/>
</dbReference>
<dbReference type="GO" id="GO:0005739">
    <property type="term" value="C:mitochondrion"/>
    <property type="evidence" value="ECO:0000314"/>
    <property type="project" value="WormBase"/>
</dbReference>
<dbReference type="GO" id="GO:0045277">
    <property type="term" value="C:respiratory chain complex IV"/>
    <property type="evidence" value="ECO:0000318"/>
    <property type="project" value="GO_Central"/>
</dbReference>
<dbReference type="GO" id="GO:0004129">
    <property type="term" value="F:cytochrome-c oxidase activity"/>
    <property type="evidence" value="ECO:0000303"/>
    <property type="project" value="UniProtKB"/>
</dbReference>
<dbReference type="GO" id="GO:0020037">
    <property type="term" value="F:heme binding"/>
    <property type="evidence" value="ECO:0007669"/>
    <property type="project" value="InterPro"/>
</dbReference>
<dbReference type="GO" id="GO:0046872">
    <property type="term" value="F:metal ion binding"/>
    <property type="evidence" value="ECO:0007669"/>
    <property type="project" value="UniProtKB-KW"/>
</dbReference>
<dbReference type="GO" id="GO:0009060">
    <property type="term" value="P:aerobic respiration"/>
    <property type="evidence" value="ECO:0000318"/>
    <property type="project" value="GO_Central"/>
</dbReference>
<dbReference type="GO" id="GO:0006123">
    <property type="term" value="P:mitochondrial electron transport, cytochrome c to oxygen"/>
    <property type="evidence" value="ECO:0000303"/>
    <property type="project" value="UniProtKB"/>
</dbReference>
<dbReference type="GO" id="GO:0022904">
    <property type="term" value="P:respiratory electron transport chain"/>
    <property type="evidence" value="ECO:0000318"/>
    <property type="project" value="GO_Central"/>
</dbReference>
<dbReference type="CDD" id="cd01663">
    <property type="entry name" value="Cyt_c_Oxidase_I"/>
    <property type="match status" value="1"/>
</dbReference>
<dbReference type="FunFam" id="1.20.210.10:FF:000022">
    <property type="entry name" value="Cytochrome c oxidase subunit 1"/>
    <property type="match status" value="1"/>
</dbReference>
<dbReference type="Gene3D" id="1.20.210.10">
    <property type="entry name" value="Cytochrome c oxidase-like, subunit I domain"/>
    <property type="match status" value="1"/>
</dbReference>
<dbReference type="InterPro" id="IPR023616">
    <property type="entry name" value="Cyt_c_oxase-like_su1_dom"/>
</dbReference>
<dbReference type="InterPro" id="IPR036927">
    <property type="entry name" value="Cyt_c_oxase-like_su1_sf"/>
</dbReference>
<dbReference type="InterPro" id="IPR000883">
    <property type="entry name" value="Cyt_C_Oxase_1"/>
</dbReference>
<dbReference type="InterPro" id="IPR023615">
    <property type="entry name" value="Cyt_c_Oxase_su1_BS"/>
</dbReference>
<dbReference type="InterPro" id="IPR033944">
    <property type="entry name" value="Cyt_c_oxase_su1_dom"/>
</dbReference>
<dbReference type="PANTHER" id="PTHR10422">
    <property type="entry name" value="CYTOCHROME C OXIDASE SUBUNIT 1"/>
    <property type="match status" value="1"/>
</dbReference>
<dbReference type="PANTHER" id="PTHR10422:SF18">
    <property type="entry name" value="CYTOCHROME C OXIDASE SUBUNIT 1"/>
    <property type="match status" value="1"/>
</dbReference>
<dbReference type="Pfam" id="PF00115">
    <property type="entry name" value="COX1"/>
    <property type="match status" value="1"/>
</dbReference>
<dbReference type="PRINTS" id="PR01165">
    <property type="entry name" value="CYCOXIDASEI"/>
</dbReference>
<dbReference type="SUPFAM" id="SSF81442">
    <property type="entry name" value="Cytochrome c oxidase subunit I-like"/>
    <property type="match status" value="1"/>
</dbReference>
<dbReference type="PROSITE" id="PS50855">
    <property type="entry name" value="COX1"/>
    <property type="match status" value="1"/>
</dbReference>
<dbReference type="PROSITE" id="PS00077">
    <property type="entry name" value="COX1_CUB"/>
    <property type="match status" value="1"/>
</dbReference>
<reference key="1">
    <citation type="journal article" date="2003" name="Mol. Biol. Evol.">
        <title>Phylogenetics in Caenorhabditis elegans: an analysis of divergence and outcrossing.</title>
        <authorList>
            <person name="Denver D.R."/>
            <person name="Morris K."/>
            <person name="Thomas W.K."/>
        </authorList>
    </citation>
    <scope>NUCLEOTIDE SEQUENCE [GENOMIC DNA]</scope>
    <scope>VARIANTS SER-12 AND MET-466</scope>
    <source>
        <strain>AB1</strain>
        <strain>AB2</strain>
        <strain>Bristol N2</strain>
        <strain>CB4852</strain>
        <strain>CB4853</strain>
        <strain>CB4854</strain>
        <strain>CB4855</strain>
        <strain>CB4856</strain>
        <strain>CB4857</strain>
        <strain>CB4858</strain>
        <strain>KR314</strain>
        <strain>PB303</strain>
        <strain>PB306</strain>
        <strain>RW7000</strain>
        <strain>TR403</strain>
    </source>
</reference>
<reference key="2">
    <citation type="journal article" date="1992" name="Genetics">
        <title>The mitochondrial genomes of two nematodes, Caenorhabditis elegans and Ascaris suum.</title>
        <authorList>
            <person name="Okimoto R."/>
            <person name="Macfarlane J.L."/>
            <person name="Clary D.O."/>
            <person name="Wolstenholme D.R."/>
        </authorList>
    </citation>
    <scope>NUCLEOTIDE SEQUENCE [LARGE SCALE GENOMIC DNA]</scope>
    <source>
        <strain>Bristol N2</strain>
    </source>
</reference>
<reference key="3">
    <citation type="journal article" date="1990" name="Nucleic Acids Res.">
        <title>Evidence for the frequent use of TTG as the translation initiation codon of mitochondrial protein genes in the nematodes, Ascaris suum and Caenorhabditis elegans.</title>
        <authorList>
            <person name="Okimoto R."/>
            <person name="Macfarlane J.L."/>
            <person name="Wolstenholme D.R."/>
        </authorList>
    </citation>
    <scope>NUCLEOTIDE SEQUENCE [GENOMIC DNA] OF 1-25</scope>
</reference>
<reference key="4">
    <citation type="journal article" date="2008" name="Curr. Biol.">
        <title>ced-4 and proto-oncogene tfg-1 antagonistically regulate cell size and apoptosis in C. elegans.</title>
        <authorList>
            <person name="Chen L."/>
            <person name="McCloskey T."/>
            <person name="Joshi P.M."/>
            <person name="Rothman J.H."/>
        </authorList>
    </citation>
    <scope>SUBCELLULAR LOCATION</scope>
</reference>
<geneLocation type="mitochondrion"/>
<sequence length="525" mass="58464">MNLYKKYQGGLAVWLESSNHKDIGTLYFIFGLWSGMVGTSFSLLIRLELAKPGFFLSNGQLYNSVITAHAILMIFFMVMPTMIGGFGNWLLPLMLGAPDMSFPRLNNLSFWLLPTSMLLILDACFVDMGCGTSWTVYPPLSTMGHPGSSVDLAIFSLHAAGLSSILGGINFMCTTKNLRSSSISLEHMTLFVWTVFVTVFLLVLSLPVLAGAITMLLTDRNLNTSFFDPSTGGNPLIYQHLFWFFGHPEVYILILPAFGIVSQSTLYLTGKKEVFGALGMVYAILSIGLIGCVVWAHHMYTVGMDLDSRAYFSAATMVIAVPTGVKVFSWLATLFGMKMVFNPLLLWVLGFIFLFTLGGLTGVVLSNSSLDIILHDTYYVVSHFHYVLSLGAVFGIFTGVTLWWSFITGYVLDKLMMSAVFILLFIGVNLTFFPLHFAGLHGFPRKYLDYPDVYSVWNIIASYGSIISTAGLFLFIYVLLESFFSYRLVISDYYSNSSPEYCMSNYVFGHSYQSEIYFSTTSLKN</sequence>
<organism>
    <name type="scientific">Caenorhabditis elegans</name>
    <dbReference type="NCBI Taxonomy" id="6239"/>
    <lineage>
        <taxon>Eukaryota</taxon>
        <taxon>Metazoa</taxon>
        <taxon>Ecdysozoa</taxon>
        <taxon>Nematoda</taxon>
        <taxon>Chromadorea</taxon>
        <taxon>Rhabditida</taxon>
        <taxon>Rhabditina</taxon>
        <taxon>Rhabditomorpha</taxon>
        <taxon>Rhabditoidea</taxon>
        <taxon>Rhabditidae</taxon>
        <taxon>Peloderinae</taxon>
        <taxon>Caenorhabditis</taxon>
    </lineage>
</organism>
<name>COX1_CAEEL</name>